<gene>
    <name evidence="1" type="primary">pckG</name>
    <name type="ordered locus">TV0200</name>
    <name type="ORF">TVG0204657</name>
</gene>
<protein>
    <recommendedName>
        <fullName evidence="1">Phosphoenolpyruvate carboxykinase [GTP]</fullName>
        <shortName evidence="1">PEP carboxykinase</shortName>
        <shortName evidence="1">PEPCK</shortName>
        <ecNumber evidence="1">4.1.1.32</ecNumber>
    </recommendedName>
</protein>
<organism>
    <name type="scientific">Thermoplasma volcanium (strain ATCC 51530 / DSM 4299 / JCM 9571 / NBRC 15438 / GSS1)</name>
    <dbReference type="NCBI Taxonomy" id="273116"/>
    <lineage>
        <taxon>Archaea</taxon>
        <taxon>Methanobacteriati</taxon>
        <taxon>Thermoplasmatota</taxon>
        <taxon>Thermoplasmata</taxon>
        <taxon>Thermoplasmatales</taxon>
        <taxon>Thermoplasmataceae</taxon>
        <taxon>Thermoplasma</taxon>
    </lineage>
</organism>
<name>PCKG_THEVO</name>
<reference key="1">
    <citation type="journal article" date="2000" name="Proc. Natl. Acad. Sci. U.S.A.">
        <title>Archaeal adaptation to higher temperatures revealed by genomic sequence of Thermoplasma volcanium.</title>
        <authorList>
            <person name="Kawashima T."/>
            <person name="Amano N."/>
            <person name="Koike H."/>
            <person name="Makino S."/>
            <person name="Higuchi S."/>
            <person name="Kawashima-Ohya Y."/>
            <person name="Watanabe K."/>
            <person name="Yamazaki M."/>
            <person name="Kanehori K."/>
            <person name="Kawamoto T."/>
            <person name="Nunoshiba T."/>
            <person name="Yamamoto Y."/>
            <person name="Aramaki H."/>
            <person name="Makino K."/>
            <person name="Suzuki M."/>
        </authorList>
    </citation>
    <scope>NUCLEOTIDE SEQUENCE [LARGE SCALE GENOMIC DNA]</scope>
    <source>
        <strain>ATCC 51530 / DSM 4299 / JCM 9571 / NBRC 15438 / GSS1</strain>
    </source>
</reference>
<sequence length="589" mass="66908">MLALDETEINDGAKRWIVSIAKHLNPSSIYVCDGTKEEFDDLASAMVKDGEMIKLNEKNFKNSYLYRSNATDVARTEERTFISARDKSFVGPLNNFLPLDRVKQVWNQFFKGAYTGKTMFVIPYALSSPESKFADFGIEVTDSKYVVLNLHYITRMGKGVIEKIGDRFIKGVHATGNLDPGNKFIIHMPWEKPEGVDADILSVNTNYGGNALLSKKCHALRIASVRAREEGWLAEHMLLLEVKDPQGKSHFITGAFPSASGKTNLAMISPPKDYRDAGWSTRLISDDISWIKIVDGKFMATNPENGFFAVVPGTNYNTNKNAMATLSKNTIFTNVGLTMSGDPWWEGLDPVYDELYDWKGNKRKIGGEPIAHPNSRYTSPLTNYPYLSDLYEDPEGVPVSAILFGGRRATLIPLVFEAFNWNHGVFLGATMGVERTAASEGKVGDLRRDPMAMRPFCGYNINEYFRHWIEIGERSKNKPKIFYVNWFRRRADGTFIWPGFAENFRVLEWIIYRTSHNDNAVETPIGYIPESLNLAGLNISEEDVKELFRIDKEGWKEEMNEIQKYFSELGNVPEEILKEFELEKKRLGY</sequence>
<keyword id="KW-0963">Cytoplasm</keyword>
<keyword id="KW-0210">Decarboxylase</keyword>
<keyword id="KW-0312">Gluconeogenesis</keyword>
<keyword id="KW-0342">GTP-binding</keyword>
<keyword id="KW-0456">Lyase</keyword>
<keyword id="KW-0464">Manganese</keyword>
<keyword id="KW-0479">Metal-binding</keyword>
<keyword id="KW-0547">Nucleotide-binding</keyword>
<proteinExistence type="inferred from homology"/>
<comment type="function">
    <text evidence="1">Catalyzes the conversion of oxaloacetate (OAA) to phosphoenolpyruvate (PEP), the rate-limiting step in the metabolic pathway that produces glucose from lactate and other precursors derived from the citric acid cycle.</text>
</comment>
<comment type="catalytic activity">
    <reaction evidence="1">
        <text>oxaloacetate + GTP = phosphoenolpyruvate + GDP + CO2</text>
        <dbReference type="Rhea" id="RHEA:10388"/>
        <dbReference type="ChEBI" id="CHEBI:16452"/>
        <dbReference type="ChEBI" id="CHEBI:16526"/>
        <dbReference type="ChEBI" id="CHEBI:37565"/>
        <dbReference type="ChEBI" id="CHEBI:58189"/>
        <dbReference type="ChEBI" id="CHEBI:58702"/>
        <dbReference type="EC" id="4.1.1.32"/>
    </reaction>
</comment>
<comment type="cofactor">
    <cofactor evidence="1">
        <name>Mn(2+)</name>
        <dbReference type="ChEBI" id="CHEBI:29035"/>
    </cofactor>
    <text evidence="1">Binds 1 Mn(2+) ion per subunit.</text>
</comment>
<comment type="pathway">
    <text evidence="1">Carbohydrate biosynthesis; gluconeogenesis.</text>
</comment>
<comment type="subcellular location">
    <subcellularLocation>
        <location evidence="1">Cytoplasm</location>
    </subcellularLocation>
</comment>
<comment type="similarity">
    <text evidence="1">Belongs to the phosphoenolpyruvate carboxykinase [GTP] family.</text>
</comment>
<dbReference type="EC" id="4.1.1.32" evidence="1"/>
<dbReference type="EMBL" id="BA000011">
    <property type="protein sequence ID" value="BAB59342.1"/>
    <property type="molecule type" value="Genomic_DNA"/>
</dbReference>
<dbReference type="RefSeq" id="WP_010916456.1">
    <property type="nucleotide sequence ID" value="NC_002689.2"/>
</dbReference>
<dbReference type="SMR" id="P58306"/>
<dbReference type="STRING" id="273116.gene:9380970"/>
<dbReference type="PaxDb" id="273116-14324414"/>
<dbReference type="GeneID" id="1441686"/>
<dbReference type="KEGG" id="tvo:TVG0204657"/>
<dbReference type="eggNOG" id="arCOG05865">
    <property type="taxonomic scope" value="Archaea"/>
</dbReference>
<dbReference type="HOGENOM" id="CLU_028872_1_1_2"/>
<dbReference type="OrthoDB" id="55875at2157"/>
<dbReference type="PhylomeDB" id="P58306"/>
<dbReference type="UniPathway" id="UPA00138"/>
<dbReference type="Proteomes" id="UP000001017">
    <property type="component" value="Chromosome"/>
</dbReference>
<dbReference type="GO" id="GO:0005829">
    <property type="term" value="C:cytosol"/>
    <property type="evidence" value="ECO:0007669"/>
    <property type="project" value="TreeGrafter"/>
</dbReference>
<dbReference type="GO" id="GO:0005525">
    <property type="term" value="F:GTP binding"/>
    <property type="evidence" value="ECO:0007669"/>
    <property type="project" value="UniProtKB-UniRule"/>
</dbReference>
<dbReference type="GO" id="GO:0030145">
    <property type="term" value="F:manganese ion binding"/>
    <property type="evidence" value="ECO:0007669"/>
    <property type="project" value="UniProtKB-UniRule"/>
</dbReference>
<dbReference type="GO" id="GO:0004613">
    <property type="term" value="F:phosphoenolpyruvate carboxykinase (GTP) activity"/>
    <property type="evidence" value="ECO:0007669"/>
    <property type="project" value="UniProtKB-UniRule"/>
</dbReference>
<dbReference type="GO" id="GO:0071333">
    <property type="term" value="P:cellular response to glucose stimulus"/>
    <property type="evidence" value="ECO:0007669"/>
    <property type="project" value="TreeGrafter"/>
</dbReference>
<dbReference type="GO" id="GO:0006094">
    <property type="term" value="P:gluconeogenesis"/>
    <property type="evidence" value="ECO:0007669"/>
    <property type="project" value="UniProtKB-UniRule"/>
</dbReference>
<dbReference type="GO" id="GO:0046327">
    <property type="term" value="P:glycerol biosynthetic process from pyruvate"/>
    <property type="evidence" value="ECO:0007669"/>
    <property type="project" value="TreeGrafter"/>
</dbReference>
<dbReference type="GO" id="GO:0006107">
    <property type="term" value="P:oxaloacetate metabolic process"/>
    <property type="evidence" value="ECO:0007669"/>
    <property type="project" value="TreeGrafter"/>
</dbReference>
<dbReference type="GO" id="GO:0019543">
    <property type="term" value="P:propionate catabolic process"/>
    <property type="evidence" value="ECO:0007669"/>
    <property type="project" value="TreeGrafter"/>
</dbReference>
<dbReference type="GO" id="GO:0033993">
    <property type="term" value="P:response to lipid"/>
    <property type="evidence" value="ECO:0007669"/>
    <property type="project" value="TreeGrafter"/>
</dbReference>
<dbReference type="GO" id="GO:0042594">
    <property type="term" value="P:response to starvation"/>
    <property type="evidence" value="ECO:0007669"/>
    <property type="project" value="TreeGrafter"/>
</dbReference>
<dbReference type="CDD" id="cd00819">
    <property type="entry name" value="PEPCK_GTP"/>
    <property type="match status" value="1"/>
</dbReference>
<dbReference type="Gene3D" id="3.90.228.20">
    <property type="match status" value="1"/>
</dbReference>
<dbReference type="Gene3D" id="3.40.449.10">
    <property type="entry name" value="Phosphoenolpyruvate Carboxykinase, domain 1"/>
    <property type="match status" value="1"/>
</dbReference>
<dbReference type="Gene3D" id="2.170.8.10">
    <property type="entry name" value="Phosphoenolpyruvate Carboxykinase, domain 2"/>
    <property type="match status" value="1"/>
</dbReference>
<dbReference type="HAMAP" id="MF_00452">
    <property type="entry name" value="PEPCK_GTP"/>
    <property type="match status" value="1"/>
</dbReference>
<dbReference type="InterPro" id="IPR013035">
    <property type="entry name" value="PEP_carboxykinase_C"/>
</dbReference>
<dbReference type="InterPro" id="IPR008209">
    <property type="entry name" value="PEP_carboxykinase_GTP"/>
</dbReference>
<dbReference type="InterPro" id="IPR035077">
    <property type="entry name" value="PEP_carboxykinase_GTP_C"/>
</dbReference>
<dbReference type="InterPro" id="IPR035078">
    <property type="entry name" value="PEP_carboxykinase_GTP_N"/>
</dbReference>
<dbReference type="InterPro" id="IPR008210">
    <property type="entry name" value="PEP_carboxykinase_N"/>
</dbReference>
<dbReference type="NCBIfam" id="NF003253">
    <property type="entry name" value="PRK04210.1"/>
    <property type="match status" value="1"/>
</dbReference>
<dbReference type="PANTHER" id="PTHR11561">
    <property type="entry name" value="PHOSPHOENOLPYRUVATE CARBOXYKINASE"/>
    <property type="match status" value="1"/>
</dbReference>
<dbReference type="PANTHER" id="PTHR11561:SF0">
    <property type="entry name" value="PHOSPHOENOLPYRUVATE CARBOXYKINASE [GTP]-RELATED"/>
    <property type="match status" value="1"/>
</dbReference>
<dbReference type="Pfam" id="PF00821">
    <property type="entry name" value="PEPCK_GTP"/>
    <property type="match status" value="1"/>
</dbReference>
<dbReference type="Pfam" id="PF17297">
    <property type="entry name" value="PEPCK_N"/>
    <property type="match status" value="1"/>
</dbReference>
<dbReference type="PIRSF" id="PIRSF001348">
    <property type="entry name" value="PEP_carboxykinase_GTP"/>
    <property type="match status" value="1"/>
</dbReference>
<dbReference type="SUPFAM" id="SSF68923">
    <property type="entry name" value="PEP carboxykinase N-terminal domain"/>
    <property type="match status" value="1"/>
</dbReference>
<dbReference type="SUPFAM" id="SSF53795">
    <property type="entry name" value="PEP carboxykinase-like"/>
    <property type="match status" value="1"/>
</dbReference>
<accession>P58306</accession>
<feature type="chain" id="PRO_0000103625" description="Phosphoenolpyruvate carboxykinase [GTP]">
    <location>
        <begin position="1"/>
        <end position="589"/>
    </location>
</feature>
<feature type="active site" evidence="1">
    <location>
        <position position="260"/>
    </location>
</feature>
<feature type="binding site" evidence="1">
    <location>
        <position position="75"/>
    </location>
    <ligand>
        <name>substrate</name>
    </ligand>
</feature>
<feature type="binding site" evidence="1">
    <location>
        <begin position="207"/>
        <end position="209"/>
    </location>
    <ligand>
        <name>substrate</name>
    </ligand>
</feature>
<feature type="binding site" evidence="1">
    <location>
        <position position="216"/>
    </location>
    <ligand>
        <name>Mn(2+)</name>
        <dbReference type="ChEBI" id="CHEBI:29035"/>
    </ligand>
</feature>
<feature type="binding site" evidence="1">
    <location>
        <position position="236"/>
    </location>
    <ligand>
        <name>Mn(2+)</name>
        <dbReference type="ChEBI" id="CHEBI:29035"/>
    </ligand>
</feature>
<feature type="binding site" evidence="1">
    <location>
        <position position="258"/>
    </location>
    <ligand>
        <name>substrate</name>
    </ligand>
</feature>
<feature type="binding site" evidence="1">
    <location>
        <begin position="259"/>
        <end position="264"/>
    </location>
    <ligand>
        <name>GTP</name>
        <dbReference type="ChEBI" id="CHEBI:37565"/>
    </ligand>
</feature>
<feature type="binding site" evidence="1">
    <location>
        <position position="287"/>
    </location>
    <ligand>
        <name>Mn(2+)</name>
        <dbReference type="ChEBI" id="CHEBI:29035"/>
    </ligand>
</feature>
<feature type="binding site" evidence="1">
    <location>
        <begin position="374"/>
        <end position="376"/>
    </location>
    <ligand>
        <name>substrate</name>
    </ligand>
</feature>
<feature type="binding site" evidence="1">
    <location>
        <position position="376"/>
    </location>
    <ligand>
        <name>GTP</name>
        <dbReference type="ChEBI" id="CHEBI:37565"/>
    </ligand>
</feature>
<feature type="binding site" evidence="1">
    <location>
        <position position="407"/>
    </location>
    <ligand>
        <name>GTP</name>
        <dbReference type="ChEBI" id="CHEBI:37565"/>
    </ligand>
</feature>
<feature type="binding site" evidence="1">
    <location>
        <begin position="500"/>
        <end position="503"/>
    </location>
    <ligand>
        <name>GTP</name>
        <dbReference type="ChEBI" id="CHEBI:37565"/>
    </ligand>
</feature>
<evidence type="ECO:0000255" key="1">
    <source>
        <dbReference type="HAMAP-Rule" id="MF_00452"/>
    </source>
</evidence>